<organism>
    <name type="scientific">Homo sapiens</name>
    <name type="common">Human</name>
    <dbReference type="NCBI Taxonomy" id="9606"/>
    <lineage>
        <taxon>Eukaryota</taxon>
        <taxon>Metazoa</taxon>
        <taxon>Chordata</taxon>
        <taxon>Craniata</taxon>
        <taxon>Vertebrata</taxon>
        <taxon>Euteleostomi</taxon>
        <taxon>Mammalia</taxon>
        <taxon>Eutheria</taxon>
        <taxon>Euarchontoglires</taxon>
        <taxon>Primates</taxon>
        <taxon>Haplorrhini</taxon>
        <taxon>Catarrhini</taxon>
        <taxon>Hominidae</taxon>
        <taxon>Homo</taxon>
    </lineage>
</organism>
<gene>
    <name evidence="15" type="primary">APRT</name>
</gene>
<comment type="function">
    <text evidence="4">Catalyzes a salvage reaction resulting in the formation of AMP, that is energically less costly than de novo synthesis.</text>
</comment>
<comment type="catalytic activity">
    <reaction evidence="4">
        <text>AMP + diphosphate = 5-phospho-alpha-D-ribose 1-diphosphate + adenine</text>
        <dbReference type="Rhea" id="RHEA:16609"/>
        <dbReference type="ChEBI" id="CHEBI:16708"/>
        <dbReference type="ChEBI" id="CHEBI:33019"/>
        <dbReference type="ChEBI" id="CHEBI:58017"/>
        <dbReference type="ChEBI" id="CHEBI:456215"/>
        <dbReference type="EC" id="2.4.2.7"/>
    </reaction>
</comment>
<comment type="biophysicochemical properties">
    <kinetics>
        <KM evidence="4">8.9 uM for 5-phospho-alpha-D-ribose 1-diphosphate</KM>
        <KM evidence="4">4 uM for adenine</KM>
    </kinetics>
</comment>
<comment type="pathway">
    <text evidence="4">Purine metabolism; AMP biosynthesis via salvage pathway; AMP from adenine: step 1/1.</text>
</comment>
<comment type="subunit">
    <text>Homodimer.</text>
</comment>
<comment type="interaction">
    <interactant intactId="EBI-1047565">
        <id>P07741</id>
    </interactant>
    <interactant intactId="EBI-5235340">
        <id>Q7Z699</id>
        <label>SPRED1</label>
    </interactant>
    <organismsDiffer>false</organismsDiffer>
    <experiments>3</experiments>
</comment>
<comment type="interaction">
    <interactant intactId="EBI-1047565">
        <id>P07741</id>
    </interactant>
    <interactant intactId="EBI-948354">
        <id>Q6DKK2</id>
        <label>TTC19</label>
    </interactant>
    <organismsDiffer>false</organismsDiffer>
    <experiments>3</experiments>
</comment>
<comment type="subcellular location">
    <subcellularLocation>
        <location>Cytoplasm</location>
    </subcellularLocation>
</comment>
<comment type="alternative products">
    <event type="alternative splicing"/>
    <isoform>
        <id>P07741-1</id>
        <name>1</name>
        <sequence type="displayed"/>
    </isoform>
    <isoform>
        <id>P07741-2</id>
        <name>2</name>
        <sequence type="described" ref="VSP_045705"/>
    </isoform>
</comment>
<comment type="disease" evidence="1 3 5 6 7 8 10 11">
    <disease id="DI-01188">
        <name>Adenine phosphoribosyltransferase deficiency</name>
        <acronym>APRTD</acronym>
        <description>An enzymatic deficiency that can lead to urolithiasis and renal failure. Patients have 2,8-dihydroxyadenine (DHA) urinary stones.</description>
        <dbReference type="MIM" id="614723"/>
    </disease>
    <text>The disease is caused by variants affecting the gene represented in this entry.</text>
</comment>
<comment type="similarity">
    <text evidence="14">Belongs to the purine/pyrimidine phosphoribosyltransferase family.</text>
</comment>
<comment type="online information" name="Wikipedia">
    <link uri="https://en.wikipedia.org/wiki/Adenine_phosphoribosyltransferase"/>
    <text>Adenine phosphoribosyltransferase entry</text>
</comment>
<dbReference type="EC" id="2.4.2.7" evidence="4"/>
<dbReference type="EMBL" id="Y00486">
    <property type="protein sequence ID" value="CAA68543.1"/>
    <property type="molecule type" value="Genomic_DNA"/>
</dbReference>
<dbReference type="EMBL" id="M16446">
    <property type="protein sequence ID" value="AAA51769.1"/>
    <property type="molecule type" value="Genomic_DNA"/>
</dbReference>
<dbReference type="EMBL" id="CR749423">
    <property type="protein sequence ID" value="CAH18261.1"/>
    <property type="molecule type" value="mRNA"/>
</dbReference>
<dbReference type="EMBL" id="AY306126">
    <property type="protein sequence ID" value="AAP45051.1"/>
    <property type="molecule type" value="Genomic_DNA"/>
</dbReference>
<dbReference type="EMBL" id="AC092384">
    <property type="status" value="NOT_ANNOTATED_CDS"/>
    <property type="molecule type" value="Genomic_DNA"/>
</dbReference>
<dbReference type="EMBL" id="CH471184">
    <property type="protein sequence ID" value="EAW66761.1"/>
    <property type="molecule type" value="Genomic_DNA"/>
</dbReference>
<dbReference type="EMBL" id="BC107151">
    <property type="protein sequence ID" value="AAI07152.1"/>
    <property type="molecule type" value="mRNA"/>
</dbReference>
<dbReference type="EMBL" id="BM550173">
    <property type="status" value="NOT_ANNOTATED_CDS"/>
    <property type="molecule type" value="mRNA"/>
</dbReference>
<dbReference type="CCDS" id="CCDS32511.1">
    <molecule id="P07741-1"/>
</dbReference>
<dbReference type="CCDS" id="CCDS45546.1">
    <molecule id="P07741-2"/>
</dbReference>
<dbReference type="PIR" id="S06232">
    <property type="entry name" value="RTHUA"/>
</dbReference>
<dbReference type="RefSeq" id="NP_000476.1">
    <molecule id="P07741-1"/>
    <property type="nucleotide sequence ID" value="NM_000485.3"/>
</dbReference>
<dbReference type="RefSeq" id="NP_001025189.1">
    <molecule id="P07741-2"/>
    <property type="nucleotide sequence ID" value="NM_001030018.2"/>
</dbReference>
<dbReference type="PDB" id="1ORE">
    <property type="method" value="X-ray"/>
    <property type="resolution" value="2.10 A"/>
    <property type="chains" value="A=1-180"/>
</dbReference>
<dbReference type="PDB" id="1ZN7">
    <property type="method" value="X-ray"/>
    <property type="resolution" value="1.83 A"/>
    <property type="chains" value="A/B=1-180"/>
</dbReference>
<dbReference type="PDB" id="1ZN8">
    <property type="method" value="X-ray"/>
    <property type="resolution" value="1.76 A"/>
    <property type="chains" value="A/B=2-180"/>
</dbReference>
<dbReference type="PDB" id="1ZN9">
    <property type="method" value="X-ray"/>
    <property type="resolution" value="2.05 A"/>
    <property type="chains" value="A/B=1-180"/>
</dbReference>
<dbReference type="PDB" id="4X44">
    <property type="method" value="X-ray"/>
    <property type="resolution" value="2.05 A"/>
    <property type="chains" value="A=1-180"/>
</dbReference>
<dbReference type="PDB" id="4X45">
    <property type="method" value="X-ray"/>
    <property type="resolution" value="1.75 A"/>
    <property type="chains" value="A/B=1-180"/>
</dbReference>
<dbReference type="PDB" id="6FCH">
    <property type="method" value="X-ray"/>
    <property type="resolution" value="1.45 A"/>
    <property type="chains" value="A/B=3-180"/>
</dbReference>
<dbReference type="PDB" id="6FCI">
    <property type="method" value="X-ray"/>
    <property type="resolution" value="1.94 A"/>
    <property type="chains" value="A/B/C/D=2-180"/>
</dbReference>
<dbReference type="PDB" id="6FCL">
    <property type="method" value="X-ray"/>
    <property type="resolution" value="1.50 A"/>
    <property type="chains" value="A/B=3-180"/>
</dbReference>
<dbReference type="PDB" id="6FD4">
    <property type="method" value="X-ray"/>
    <property type="resolution" value="1.50 A"/>
    <property type="chains" value="A/B=3-180"/>
</dbReference>
<dbReference type="PDB" id="6FD5">
    <property type="method" value="X-ray"/>
    <property type="resolution" value="1.55 A"/>
    <property type="chains" value="A/B=3-180"/>
</dbReference>
<dbReference type="PDB" id="6FD6">
    <property type="method" value="X-ray"/>
    <property type="resolution" value="1.80 A"/>
    <property type="chains" value="A/B=3-180"/>
</dbReference>
<dbReference type="PDB" id="6HGP">
    <property type="method" value="X-ray"/>
    <property type="resolution" value="1.70 A"/>
    <property type="chains" value="A/B=3-180"/>
</dbReference>
<dbReference type="PDB" id="6HGQ">
    <property type="method" value="X-ray"/>
    <property type="resolution" value="1.90 A"/>
    <property type="chains" value="A/B/C/D=2-180"/>
</dbReference>
<dbReference type="PDB" id="6HGR">
    <property type="method" value="X-ray"/>
    <property type="resolution" value="1.52 A"/>
    <property type="chains" value="A/B=3-180"/>
</dbReference>
<dbReference type="PDB" id="6HGS">
    <property type="method" value="X-ray"/>
    <property type="resolution" value="1.55 A"/>
    <property type="chains" value="A/B=3-180"/>
</dbReference>
<dbReference type="PDBsum" id="1ORE"/>
<dbReference type="PDBsum" id="1ZN7"/>
<dbReference type="PDBsum" id="1ZN8"/>
<dbReference type="PDBsum" id="1ZN9"/>
<dbReference type="PDBsum" id="4X44"/>
<dbReference type="PDBsum" id="4X45"/>
<dbReference type="PDBsum" id="6FCH"/>
<dbReference type="PDBsum" id="6FCI"/>
<dbReference type="PDBsum" id="6FCL"/>
<dbReference type="PDBsum" id="6FD4"/>
<dbReference type="PDBsum" id="6FD5"/>
<dbReference type="PDBsum" id="6FD6"/>
<dbReference type="PDBsum" id="6HGP"/>
<dbReference type="PDBsum" id="6HGQ"/>
<dbReference type="PDBsum" id="6HGR"/>
<dbReference type="PDBsum" id="6HGS"/>
<dbReference type="SMR" id="P07741"/>
<dbReference type="BioGRID" id="106849">
    <property type="interactions" value="102"/>
</dbReference>
<dbReference type="FunCoup" id="P07741">
    <property type="interactions" value="1294"/>
</dbReference>
<dbReference type="IntAct" id="P07741">
    <property type="interactions" value="35"/>
</dbReference>
<dbReference type="MINT" id="P07741"/>
<dbReference type="STRING" id="9606.ENSP00000367615"/>
<dbReference type="ChEMBL" id="CHEMBL4105819"/>
<dbReference type="DrugBank" id="DB01632">
    <property type="generic name" value="5-O-phosphono-alpha-D-ribofuranosyl diphosphate"/>
</dbReference>
<dbReference type="DrugBank" id="DB03506">
    <property type="generic name" value="5H-pyrrolo[3,2-d]pyrimidin-4-amine"/>
</dbReference>
<dbReference type="DrugBank" id="DB00173">
    <property type="generic name" value="Adenine"/>
</dbReference>
<dbReference type="DrugBank" id="DB00131">
    <property type="generic name" value="Adenosine phosphate"/>
</dbReference>
<dbReference type="DrugBank" id="DB04272">
    <property type="generic name" value="Citric acid"/>
</dbReference>
<dbReference type="GlyGen" id="P07741">
    <property type="glycosylation" value="2 sites, 1 O-linked glycan (1 site)"/>
</dbReference>
<dbReference type="iPTMnet" id="P07741"/>
<dbReference type="PhosphoSitePlus" id="P07741"/>
<dbReference type="SwissPalm" id="P07741"/>
<dbReference type="BioMuta" id="APRT"/>
<dbReference type="DMDM" id="114074"/>
<dbReference type="jPOST" id="P07741"/>
<dbReference type="MassIVE" id="P07741"/>
<dbReference type="PaxDb" id="9606-ENSP00000367615"/>
<dbReference type="PeptideAtlas" id="P07741"/>
<dbReference type="PRIDE" id="P07741"/>
<dbReference type="ProteomicsDB" id="33954"/>
<dbReference type="ProteomicsDB" id="52026">
    <molecule id="P07741-1"/>
</dbReference>
<dbReference type="Pumba" id="P07741"/>
<dbReference type="TopDownProteomics" id="P07741-1">
    <molecule id="P07741-1"/>
</dbReference>
<dbReference type="TopDownProteomics" id="P07741-2">
    <molecule id="P07741-2"/>
</dbReference>
<dbReference type="Antibodypedia" id="17347">
    <property type="antibodies" value="338 antibodies from 32 providers"/>
</dbReference>
<dbReference type="DNASU" id="353"/>
<dbReference type="Ensembl" id="ENST00000378364.8">
    <molecule id="P07741-1"/>
    <property type="protein sequence ID" value="ENSP00000367615.3"/>
    <property type="gene ID" value="ENSG00000198931.11"/>
</dbReference>
<dbReference type="Ensembl" id="ENST00000426324.6">
    <molecule id="P07741-2"/>
    <property type="protein sequence ID" value="ENSP00000397007.2"/>
    <property type="gene ID" value="ENSG00000198931.11"/>
</dbReference>
<dbReference type="GeneID" id="353"/>
<dbReference type="KEGG" id="hsa:353"/>
<dbReference type="MANE-Select" id="ENST00000378364.8">
    <property type="protein sequence ID" value="ENSP00000367615.3"/>
    <property type="RefSeq nucleotide sequence ID" value="NM_000485.3"/>
    <property type="RefSeq protein sequence ID" value="NP_000476.1"/>
</dbReference>
<dbReference type="UCSC" id="uc002flv.4">
    <molecule id="P07741-1"/>
    <property type="organism name" value="human"/>
</dbReference>
<dbReference type="AGR" id="HGNC:626"/>
<dbReference type="CTD" id="353"/>
<dbReference type="DisGeNET" id="353"/>
<dbReference type="GeneCards" id="APRT"/>
<dbReference type="GeneReviews" id="APRT"/>
<dbReference type="HGNC" id="HGNC:626">
    <property type="gene designation" value="APRT"/>
</dbReference>
<dbReference type="HPA" id="ENSG00000198931">
    <property type="expression patterns" value="Low tissue specificity"/>
</dbReference>
<dbReference type="MalaCards" id="APRT"/>
<dbReference type="MIM" id="102600">
    <property type="type" value="gene"/>
</dbReference>
<dbReference type="MIM" id="614723">
    <property type="type" value="phenotype"/>
</dbReference>
<dbReference type="neXtProt" id="NX_P07741"/>
<dbReference type="OpenTargets" id="ENSG00000198931"/>
<dbReference type="Orphanet" id="976">
    <property type="disease" value="Adenine phosphoribosyltransferase deficiency"/>
</dbReference>
<dbReference type="PharmGKB" id="PA24914"/>
<dbReference type="VEuPathDB" id="HostDB:ENSG00000198931"/>
<dbReference type="eggNOG" id="KOG1712">
    <property type="taxonomic scope" value="Eukaryota"/>
</dbReference>
<dbReference type="GeneTree" id="ENSGT00390000017259"/>
<dbReference type="HOGENOM" id="CLU_063339_3_2_1"/>
<dbReference type="InParanoid" id="P07741"/>
<dbReference type="OMA" id="QAYDLEY"/>
<dbReference type="OrthoDB" id="363185at2759"/>
<dbReference type="PAN-GO" id="P07741">
    <property type="GO annotations" value="6 GO annotations based on evolutionary models"/>
</dbReference>
<dbReference type="PhylomeDB" id="P07741"/>
<dbReference type="TreeFam" id="TF300227"/>
<dbReference type="PathwayCommons" id="P07741"/>
<dbReference type="Reactome" id="R-HSA-6798695">
    <property type="pathway name" value="Neutrophil degranulation"/>
</dbReference>
<dbReference type="Reactome" id="R-HSA-74217">
    <property type="pathway name" value="Purine salvage"/>
</dbReference>
<dbReference type="Reactome" id="R-HSA-9734195">
    <property type="pathway name" value="Defective APRT disrupts adenine salvage"/>
</dbReference>
<dbReference type="SABIO-RK" id="P07741"/>
<dbReference type="SignaLink" id="P07741"/>
<dbReference type="UniPathway" id="UPA00588">
    <property type="reaction ID" value="UER00646"/>
</dbReference>
<dbReference type="BioGRID-ORCS" id="353">
    <property type="hits" value="54 hits in 1165 CRISPR screens"/>
</dbReference>
<dbReference type="ChiTaRS" id="APRT">
    <property type="organism name" value="human"/>
</dbReference>
<dbReference type="EvolutionaryTrace" id="P07741"/>
<dbReference type="GeneWiki" id="Adenine_phosphoribosyltransferase"/>
<dbReference type="GenomeRNAi" id="353"/>
<dbReference type="Pharos" id="P07741">
    <property type="development level" value="Tchem"/>
</dbReference>
<dbReference type="PRO" id="PR:P07741"/>
<dbReference type="Proteomes" id="UP000005640">
    <property type="component" value="Chromosome 16"/>
</dbReference>
<dbReference type="RNAct" id="P07741">
    <property type="molecule type" value="protein"/>
</dbReference>
<dbReference type="Bgee" id="ENSG00000198931">
    <property type="expression patterns" value="Expressed in skin of abdomen and 203 other cell types or tissues"/>
</dbReference>
<dbReference type="ExpressionAtlas" id="P07741">
    <property type="expression patterns" value="baseline and differential"/>
</dbReference>
<dbReference type="GO" id="GO:0005737">
    <property type="term" value="C:cytoplasm"/>
    <property type="evidence" value="ECO:0000318"/>
    <property type="project" value="GO_Central"/>
</dbReference>
<dbReference type="GO" id="GO:0005829">
    <property type="term" value="C:cytosol"/>
    <property type="evidence" value="ECO:0000314"/>
    <property type="project" value="HPA"/>
</dbReference>
<dbReference type="GO" id="GO:0070062">
    <property type="term" value="C:extracellular exosome"/>
    <property type="evidence" value="ECO:0007005"/>
    <property type="project" value="UniProtKB"/>
</dbReference>
<dbReference type="GO" id="GO:0005576">
    <property type="term" value="C:extracellular region"/>
    <property type="evidence" value="ECO:0000304"/>
    <property type="project" value="Reactome"/>
</dbReference>
<dbReference type="GO" id="GO:0005654">
    <property type="term" value="C:nucleoplasm"/>
    <property type="evidence" value="ECO:0000314"/>
    <property type="project" value="HPA"/>
</dbReference>
<dbReference type="GO" id="GO:0034774">
    <property type="term" value="C:secretory granule lumen"/>
    <property type="evidence" value="ECO:0000304"/>
    <property type="project" value="Reactome"/>
</dbReference>
<dbReference type="GO" id="GO:0002055">
    <property type="term" value="F:adenine binding"/>
    <property type="evidence" value="ECO:0000318"/>
    <property type="project" value="GO_Central"/>
</dbReference>
<dbReference type="GO" id="GO:0003999">
    <property type="term" value="F:adenine phosphoribosyltransferase activity"/>
    <property type="evidence" value="ECO:0000314"/>
    <property type="project" value="UniProtKB"/>
</dbReference>
<dbReference type="GO" id="GO:0016208">
    <property type="term" value="F:AMP binding"/>
    <property type="evidence" value="ECO:0000314"/>
    <property type="project" value="MGI"/>
</dbReference>
<dbReference type="GO" id="GO:0006168">
    <property type="term" value="P:adenine salvage"/>
    <property type="evidence" value="ECO:0000318"/>
    <property type="project" value="GO_Central"/>
</dbReference>
<dbReference type="GO" id="GO:0044209">
    <property type="term" value="P:AMP salvage"/>
    <property type="evidence" value="ECO:0000318"/>
    <property type="project" value="GO_Central"/>
</dbReference>
<dbReference type="GO" id="GO:0032263">
    <property type="term" value="P:GMP salvage"/>
    <property type="evidence" value="ECO:0007669"/>
    <property type="project" value="Ensembl"/>
</dbReference>
<dbReference type="GO" id="GO:0007625">
    <property type="term" value="P:grooming behavior"/>
    <property type="evidence" value="ECO:0007669"/>
    <property type="project" value="Ensembl"/>
</dbReference>
<dbReference type="GO" id="GO:0032264">
    <property type="term" value="P:IMP salvage"/>
    <property type="evidence" value="ECO:0007669"/>
    <property type="project" value="Ensembl"/>
</dbReference>
<dbReference type="GO" id="GO:0006166">
    <property type="term" value="P:purine ribonucleoside salvage"/>
    <property type="evidence" value="ECO:0007669"/>
    <property type="project" value="UniProtKB-KW"/>
</dbReference>
<dbReference type="CDD" id="cd06223">
    <property type="entry name" value="PRTases_typeI"/>
    <property type="match status" value="1"/>
</dbReference>
<dbReference type="FunFam" id="3.40.50.2020:FF:000123">
    <property type="entry name" value="Adenine phosphoribosyltransferase"/>
    <property type="match status" value="1"/>
</dbReference>
<dbReference type="Gene3D" id="3.40.50.2020">
    <property type="match status" value="1"/>
</dbReference>
<dbReference type="HAMAP" id="MF_00004">
    <property type="entry name" value="Aden_phosphoribosyltr"/>
    <property type="match status" value="1"/>
</dbReference>
<dbReference type="InterPro" id="IPR005764">
    <property type="entry name" value="Ade_phspho_trans"/>
</dbReference>
<dbReference type="InterPro" id="IPR000836">
    <property type="entry name" value="PRibTrfase_dom"/>
</dbReference>
<dbReference type="InterPro" id="IPR029057">
    <property type="entry name" value="PRTase-like"/>
</dbReference>
<dbReference type="InterPro" id="IPR050054">
    <property type="entry name" value="UPRTase/APRTase"/>
</dbReference>
<dbReference type="NCBIfam" id="TIGR01090">
    <property type="entry name" value="apt"/>
    <property type="match status" value="1"/>
</dbReference>
<dbReference type="NCBIfam" id="NF002634">
    <property type="entry name" value="PRK02304.1-3"/>
    <property type="match status" value="1"/>
</dbReference>
<dbReference type="NCBIfam" id="NF002636">
    <property type="entry name" value="PRK02304.1-5"/>
    <property type="match status" value="1"/>
</dbReference>
<dbReference type="PANTHER" id="PTHR32315">
    <property type="entry name" value="ADENINE PHOSPHORIBOSYLTRANSFERASE"/>
    <property type="match status" value="1"/>
</dbReference>
<dbReference type="PANTHER" id="PTHR32315:SF3">
    <property type="entry name" value="ADENINE PHOSPHORIBOSYLTRANSFERASE"/>
    <property type="match status" value="1"/>
</dbReference>
<dbReference type="Pfam" id="PF00156">
    <property type="entry name" value="Pribosyltran"/>
    <property type="match status" value="1"/>
</dbReference>
<dbReference type="SUPFAM" id="SSF53271">
    <property type="entry name" value="PRTase-like"/>
    <property type="match status" value="1"/>
</dbReference>
<dbReference type="PROSITE" id="PS00103">
    <property type="entry name" value="PUR_PYR_PR_TRANSFER"/>
    <property type="match status" value="1"/>
</dbReference>
<proteinExistence type="evidence at protein level"/>
<protein>
    <recommendedName>
        <fullName evidence="14">Adenine phosphoribosyltransferase</fullName>
        <shortName>APRT</shortName>
        <ecNumber evidence="4">2.4.2.7</ecNumber>
    </recommendedName>
</protein>
<keyword id="KW-0002">3D-structure</keyword>
<keyword id="KW-0007">Acetylation</keyword>
<keyword id="KW-0025">Alternative splicing</keyword>
<keyword id="KW-0963">Cytoplasm</keyword>
<keyword id="KW-0903">Direct protein sequencing</keyword>
<keyword id="KW-0225">Disease variant</keyword>
<keyword id="KW-0328">Glycosyltransferase</keyword>
<keyword id="KW-0597">Phosphoprotein</keyword>
<keyword id="KW-1267">Proteomics identification</keyword>
<keyword id="KW-0660">Purine salvage</keyword>
<keyword id="KW-1185">Reference proteome</keyword>
<keyword id="KW-0808">Transferase</keyword>
<feature type="initiator methionine" description="Removed" evidence="2 9 16 17 19 20 23">
    <location>
        <position position="1"/>
    </location>
</feature>
<feature type="chain" id="PRO_0000149504" description="Adenine phosphoribosyltransferase">
    <location>
        <begin position="2"/>
        <end position="180"/>
    </location>
</feature>
<feature type="modified residue" description="N-acetylalanine" evidence="2 16 17 19 20 23">
    <location>
        <position position="2"/>
    </location>
</feature>
<feature type="modified residue" description="Phosphoserine" evidence="16">
    <location>
        <position position="4"/>
    </location>
</feature>
<feature type="modified residue" description="Phosphoserine" evidence="16 21">
    <location>
        <position position="15"/>
    </location>
</feature>
<feature type="modified residue" description="Phosphoserine" evidence="21">
    <location>
        <position position="30"/>
    </location>
</feature>
<feature type="modified residue" description="Phosphotyrosine" evidence="16">
    <location>
        <position position="60"/>
    </location>
</feature>
<feature type="modified residue" description="Phosphoserine" evidence="16 21 22">
    <location>
        <position position="66"/>
    </location>
</feature>
<feature type="modified residue" description="N6-acetyllysine" evidence="18">
    <location>
        <position position="114"/>
    </location>
</feature>
<feature type="modified residue" description="Phosphothreonine" evidence="16">
    <location>
        <position position="135"/>
    </location>
</feature>
<feature type="splice variant" id="VSP_045705" description="In isoform 2." evidence="13">
    <original>GTMNAACELLGRLQAEVLECVSLVELTSLKGREKLAPVPFFSLLQYE</original>
    <variation>V</variation>
    <location>
        <begin position="134"/>
        <end position="180"/>
    </location>
</feature>
<feature type="sequence variant" id="VAR_069049" description="In APRTD; dbSNP:rs1909145695." evidence="7">
    <original>L</original>
    <variation>P</variation>
    <location>
        <position position="33"/>
    </location>
</feature>
<feature type="sequence variant" id="VAR_006747" description="In APRTD; Icelandic type; dbSNP:rs104894506." evidence="6">
    <original>D</original>
    <variation>V</variation>
    <location>
        <position position="65"/>
    </location>
</feature>
<feature type="sequence variant" id="VAR_069050" description="In APRTD; dbSNP:rs200392753." evidence="5">
    <original>V</original>
    <variation>M</variation>
    <location>
        <position position="84"/>
    </location>
</feature>
<feature type="sequence variant" id="VAR_006748" description="In APRTD; Newfoundland type; dbSNP:rs104894508." evidence="11">
    <original>L</original>
    <variation>P</variation>
    <location>
        <position position="110"/>
    </location>
</feature>
<feature type="sequence variant" id="VAR_019055" description="In dbSNP:rs8191494." evidence="12">
    <original>Q</original>
    <variation>R</variation>
    <location>
        <position position="121"/>
    </location>
</feature>
<feature type="sequence variant" id="VAR_069051" description="In APRTD; dbSNP:rs1909055807." evidence="5">
    <original>G</original>
    <variation>D</variation>
    <location>
        <position position="133"/>
    </location>
</feature>
<feature type="sequence variant" id="VAR_006749" description="In APRTD; Japanese type; allele APRT*J; most common mutation; dbSNP:rs28999113." evidence="3 7 8 10">
    <original>M</original>
    <variation>T</variation>
    <location>
        <position position="136"/>
    </location>
</feature>
<feature type="sequence variant" id="VAR_022608" description="In APRTD; dbSNP:rs281860266." evidence="1">
    <original>V</original>
    <variation>F</variation>
    <location>
        <position position="150"/>
    </location>
</feature>
<feature type="sequence variant" id="VAR_022609" description="In APRTD; dbSNP:rs764321075." evidence="1">
    <original>C</original>
    <variation>R</variation>
    <location>
        <position position="153"/>
    </location>
</feature>
<feature type="sequence variant" id="VAR_037575" description="In APRTD." evidence="8">
    <location>
        <position position="173"/>
    </location>
</feature>
<feature type="helix" evidence="24">
    <location>
        <begin position="4"/>
        <end position="10"/>
    </location>
</feature>
<feature type="strand" evidence="24">
    <location>
        <begin position="14"/>
        <end position="17"/>
    </location>
</feature>
<feature type="strand" evidence="24">
    <location>
        <begin position="19"/>
        <end position="21"/>
    </location>
</feature>
<feature type="strand" evidence="24">
    <location>
        <begin position="25"/>
        <end position="28"/>
    </location>
</feature>
<feature type="helix" evidence="24">
    <location>
        <begin position="30"/>
        <end position="34"/>
    </location>
</feature>
<feature type="helix" evidence="24">
    <location>
        <begin position="36"/>
        <end position="54"/>
    </location>
</feature>
<feature type="strand" evidence="24">
    <location>
        <begin position="60"/>
        <end position="64"/>
    </location>
</feature>
<feature type="helix" evidence="24">
    <location>
        <begin position="67"/>
        <end position="70"/>
    </location>
</feature>
<feature type="helix" evidence="24">
    <location>
        <begin position="72"/>
        <end position="79"/>
    </location>
</feature>
<feature type="strand" evidence="24">
    <location>
        <begin position="82"/>
        <end position="88"/>
    </location>
</feature>
<feature type="strand" evidence="24">
    <location>
        <begin position="94"/>
        <end position="103"/>
    </location>
</feature>
<feature type="strand" evidence="24">
    <location>
        <begin position="106"/>
        <end position="113"/>
    </location>
</feature>
<feature type="helix" evidence="25">
    <location>
        <begin position="114"/>
        <end position="116"/>
    </location>
</feature>
<feature type="strand" evidence="24">
    <location>
        <begin position="122"/>
        <end position="133"/>
    </location>
</feature>
<feature type="helix" evidence="24">
    <location>
        <begin position="134"/>
        <end position="145"/>
    </location>
</feature>
<feature type="strand" evidence="24">
    <location>
        <begin position="149"/>
        <end position="159"/>
    </location>
</feature>
<feature type="helix" evidence="24">
    <location>
        <begin position="160"/>
        <end position="162"/>
    </location>
</feature>
<feature type="helix" evidence="24">
    <location>
        <begin position="164"/>
        <end position="168"/>
    </location>
</feature>
<feature type="strand" evidence="24">
    <location>
        <begin position="173"/>
        <end position="179"/>
    </location>
</feature>
<accession>P07741</accession>
<accession>G5E9J2</accession>
<accession>Q3KP55</accession>
<accession>Q68DF9</accession>
<reference key="1">
    <citation type="journal article" date="1987" name="Nucleic Acids Res.">
        <title>Nucleotide sequence of the human APRT gene.</title>
        <authorList>
            <person name="Hidaka Y."/>
            <person name="Tarle S.A."/>
            <person name="Toole T.E.O."/>
            <person name="Kelley W.N."/>
            <person name="Palella T.D."/>
        </authorList>
    </citation>
    <scope>NUCLEOTIDE SEQUENCE [GENOMIC DNA]</scope>
    <source>
        <tissue>Liver</tissue>
    </source>
</reference>
<reference key="2">
    <citation type="journal article" date="1987" name="Proc. Natl. Acad. Sci. U.S.A.">
        <title>Comparative anatomy of the human APRT gene and enzyme: nucleotide sequence divergence and conservation of a nonrandom CpG dinucleotide arrangement.</title>
        <authorList>
            <person name="Broderick T.P."/>
            <person name="Schaff D.A."/>
            <person name="Bertino A.M."/>
            <person name="Dush M.K."/>
            <person name="Tischfield J.A."/>
            <person name="Stambrook P.J."/>
        </authorList>
    </citation>
    <scope>NUCLEOTIDE SEQUENCE [GENOMIC DNA]</scope>
</reference>
<reference key="3">
    <citation type="journal article" date="2007" name="BMC Genomics">
        <title>The full-ORF clone resource of the German cDNA consortium.</title>
        <authorList>
            <person name="Bechtel S."/>
            <person name="Rosenfelder H."/>
            <person name="Duda A."/>
            <person name="Schmidt C.P."/>
            <person name="Ernst U."/>
            <person name="Wellenreuther R."/>
            <person name="Mehrle A."/>
            <person name="Schuster C."/>
            <person name="Bahr A."/>
            <person name="Bloecker H."/>
            <person name="Heubner D."/>
            <person name="Hoerlein A."/>
            <person name="Michel G."/>
            <person name="Wedler H."/>
            <person name="Koehrer K."/>
            <person name="Ottenwaelder B."/>
            <person name="Poustka A."/>
            <person name="Wiemann S."/>
            <person name="Schupp I."/>
        </authorList>
    </citation>
    <scope>NUCLEOTIDE SEQUENCE [LARGE SCALE MRNA] (ISOFORM 1)</scope>
    <source>
        <tissue>Uterine endothelium</tissue>
    </source>
</reference>
<reference key="4">
    <citation type="submission" date="2003-05" db="EMBL/GenBank/DDBJ databases">
        <authorList>
            <consortium name="NIEHS SNPs program"/>
        </authorList>
    </citation>
    <scope>NUCLEOTIDE SEQUENCE [GENOMIC DNA]</scope>
    <scope>VARIANT ARG-121</scope>
</reference>
<reference key="5">
    <citation type="journal article" date="2004" name="Nature">
        <title>The sequence and analysis of duplication-rich human chromosome 16.</title>
        <authorList>
            <person name="Martin J."/>
            <person name="Han C."/>
            <person name="Gordon L.A."/>
            <person name="Terry A."/>
            <person name="Prabhakar S."/>
            <person name="She X."/>
            <person name="Xie G."/>
            <person name="Hellsten U."/>
            <person name="Chan Y.M."/>
            <person name="Altherr M."/>
            <person name="Couronne O."/>
            <person name="Aerts A."/>
            <person name="Bajorek E."/>
            <person name="Black S."/>
            <person name="Blumer H."/>
            <person name="Branscomb E."/>
            <person name="Brown N.C."/>
            <person name="Bruno W.J."/>
            <person name="Buckingham J.M."/>
            <person name="Callen D.F."/>
            <person name="Campbell C.S."/>
            <person name="Campbell M.L."/>
            <person name="Campbell E.W."/>
            <person name="Caoile C."/>
            <person name="Challacombe J.F."/>
            <person name="Chasteen L.A."/>
            <person name="Chertkov O."/>
            <person name="Chi H.C."/>
            <person name="Christensen M."/>
            <person name="Clark L.M."/>
            <person name="Cohn J.D."/>
            <person name="Denys M."/>
            <person name="Detter J.C."/>
            <person name="Dickson M."/>
            <person name="Dimitrijevic-Bussod M."/>
            <person name="Escobar J."/>
            <person name="Fawcett J.J."/>
            <person name="Flowers D."/>
            <person name="Fotopulos D."/>
            <person name="Glavina T."/>
            <person name="Gomez M."/>
            <person name="Gonzales E."/>
            <person name="Goodstein D."/>
            <person name="Goodwin L.A."/>
            <person name="Grady D.L."/>
            <person name="Grigoriev I."/>
            <person name="Groza M."/>
            <person name="Hammon N."/>
            <person name="Hawkins T."/>
            <person name="Haydu L."/>
            <person name="Hildebrand C.E."/>
            <person name="Huang W."/>
            <person name="Israni S."/>
            <person name="Jett J."/>
            <person name="Jewett P.B."/>
            <person name="Kadner K."/>
            <person name="Kimball H."/>
            <person name="Kobayashi A."/>
            <person name="Krawczyk M.-C."/>
            <person name="Leyba T."/>
            <person name="Longmire J.L."/>
            <person name="Lopez F."/>
            <person name="Lou Y."/>
            <person name="Lowry S."/>
            <person name="Ludeman T."/>
            <person name="Manohar C.F."/>
            <person name="Mark G.A."/>
            <person name="McMurray K.L."/>
            <person name="Meincke L.J."/>
            <person name="Morgan J."/>
            <person name="Moyzis R.K."/>
            <person name="Mundt M.O."/>
            <person name="Munk A.C."/>
            <person name="Nandkeshwar R.D."/>
            <person name="Pitluck S."/>
            <person name="Pollard M."/>
            <person name="Predki P."/>
            <person name="Parson-Quintana B."/>
            <person name="Ramirez L."/>
            <person name="Rash S."/>
            <person name="Retterer J."/>
            <person name="Ricke D.O."/>
            <person name="Robinson D.L."/>
            <person name="Rodriguez A."/>
            <person name="Salamov A."/>
            <person name="Saunders E.H."/>
            <person name="Scott D."/>
            <person name="Shough T."/>
            <person name="Stallings R.L."/>
            <person name="Stalvey M."/>
            <person name="Sutherland R.D."/>
            <person name="Tapia R."/>
            <person name="Tesmer J.G."/>
            <person name="Thayer N."/>
            <person name="Thompson L.S."/>
            <person name="Tice H."/>
            <person name="Torney D.C."/>
            <person name="Tran-Gyamfi M."/>
            <person name="Tsai M."/>
            <person name="Ulanovsky L.E."/>
            <person name="Ustaszewska A."/>
            <person name="Vo N."/>
            <person name="White P.S."/>
            <person name="Williams A.L."/>
            <person name="Wills P.L."/>
            <person name="Wu J.-R."/>
            <person name="Wu K."/>
            <person name="Yang J."/>
            <person name="DeJong P."/>
            <person name="Bruce D."/>
            <person name="Doggett N.A."/>
            <person name="Deaven L."/>
            <person name="Schmutz J."/>
            <person name="Grimwood J."/>
            <person name="Richardson P."/>
            <person name="Rokhsar D.S."/>
            <person name="Eichler E.E."/>
            <person name="Gilna P."/>
            <person name="Lucas S.M."/>
            <person name="Myers R.M."/>
            <person name="Rubin E.M."/>
            <person name="Pennacchio L.A."/>
        </authorList>
    </citation>
    <scope>NUCLEOTIDE SEQUENCE [LARGE SCALE GENOMIC DNA]</scope>
</reference>
<reference key="6">
    <citation type="submission" date="2005-09" db="EMBL/GenBank/DDBJ databases">
        <authorList>
            <person name="Mural R.J."/>
            <person name="Istrail S."/>
            <person name="Sutton G."/>
            <person name="Florea L."/>
            <person name="Halpern A.L."/>
            <person name="Mobarry C.M."/>
            <person name="Lippert R."/>
            <person name="Walenz B."/>
            <person name="Shatkay H."/>
            <person name="Dew I."/>
            <person name="Miller J.R."/>
            <person name="Flanigan M.J."/>
            <person name="Edwards N.J."/>
            <person name="Bolanos R."/>
            <person name="Fasulo D."/>
            <person name="Halldorsson B.V."/>
            <person name="Hannenhalli S."/>
            <person name="Turner R."/>
            <person name="Yooseph S."/>
            <person name="Lu F."/>
            <person name="Nusskern D.R."/>
            <person name="Shue B.C."/>
            <person name="Zheng X.H."/>
            <person name="Zhong F."/>
            <person name="Delcher A.L."/>
            <person name="Huson D.H."/>
            <person name="Kravitz S.A."/>
            <person name="Mouchard L."/>
            <person name="Reinert K."/>
            <person name="Remington K.A."/>
            <person name="Clark A.G."/>
            <person name="Waterman M.S."/>
            <person name="Eichler E.E."/>
            <person name="Adams M.D."/>
            <person name="Hunkapiller M.W."/>
            <person name="Myers E.W."/>
            <person name="Venter J.C."/>
        </authorList>
    </citation>
    <scope>NUCLEOTIDE SEQUENCE [LARGE SCALE GENOMIC DNA]</scope>
</reference>
<reference key="7">
    <citation type="journal article" date="2004" name="Genome Res.">
        <title>The status, quality, and expansion of the NIH full-length cDNA project: the Mammalian Gene Collection (MGC).</title>
        <authorList>
            <consortium name="The MGC Project Team"/>
        </authorList>
    </citation>
    <scope>NUCLEOTIDE SEQUENCE [LARGE SCALE MRNA] (ISOFORMS 1 AND 2)</scope>
    <source>
        <tissue>Astrocytoma</tissue>
    </source>
</reference>
<reference key="8">
    <citation type="journal article" date="1986" name="J. Biol. Chem.">
        <title>Human adenine phosphoribosyltransferase. Complete amino acid sequence of the erythrocyte enzyme.</title>
        <authorList>
            <person name="Wilson J.M."/>
            <person name="O'Toole T.E."/>
            <person name="Argos P."/>
            <person name="Shewach D.S."/>
            <person name="Daddona P.E."/>
            <person name="Kelley W.N."/>
        </authorList>
    </citation>
    <scope>PROTEIN SEQUENCE OF 2-180</scope>
</reference>
<reference key="9">
    <citation type="journal article" date="2003" name="Nat. Biotechnol.">
        <title>Exploring proteomes and analyzing protein processing by mass spectrometric identification of sorted N-terminal peptides.</title>
        <authorList>
            <person name="Gevaert K."/>
            <person name="Goethals M."/>
            <person name="Martens L."/>
            <person name="Van Damme J."/>
            <person name="Staes A."/>
            <person name="Thomas G.R."/>
            <person name="Vandekerckhove J."/>
        </authorList>
    </citation>
    <scope>PROTEIN SEQUENCE OF 2-12</scope>
    <scope>ACETYLATION AT ALA-2</scope>
    <source>
        <tissue>Platelet</tissue>
    </source>
</reference>
<reference key="10">
    <citation type="journal article" date="2009" name="Anal. Chem.">
        <title>Lys-N and trypsin cover complementary parts of the phosphoproteome in a refined SCX-based approach.</title>
        <authorList>
            <person name="Gauci S."/>
            <person name="Helbig A.O."/>
            <person name="Slijper M."/>
            <person name="Krijgsveld J."/>
            <person name="Heck A.J."/>
            <person name="Mohammed S."/>
        </authorList>
    </citation>
    <scope>ACETYLATION [LARGE SCALE ANALYSIS] AT ALA-2</scope>
    <scope>CLEAVAGE OF INITIATOR METHIONINE [LARGE SCALE ANALYSIS]</scope>
    <scope>IDENTIFICATION BY MASS SPECTROMETRY [LARGE SCALE ANALYSIS]</scope>
</reference>
<reference key="11">
    <citation type="journal article" date="2009" name="Mol. Cell. Proteomics">
        <title>Large-scale proteomics analysis of the human kinome.</title>
        <authorList>
            <person name="Oppermann F.S."/>
            <person name="Gnad F."/>
            <person name="Olsen J.V."/>
            <person name="Hornberger R."/>
            <person name="Greff Z."/>
            <person name="Keri G."/>
            <person name="Mann M."/>
            <person name="Daub H."/>
        </authorList>
    </citation>
    <scope>ACETYLATION [LARGE SCALE ANALYSIS] AT ALA-2</scope>
    <scope>PHOSPHORYLATION [LARGE SCALE ANALYSIS] AT SER-4; SER-15; TYR-60; SER-66 AND THR-135</scope>
    <scope>CLEAVAGE OF INITIATOR METHIONINE [LARGE SCALE ANALYSIS]</scope>
    <scope>IDENTIFICATION BY MASS SPECTROMETRY [LARGE SCALE ANALYSIS]</scope>
</reference>
<reference key="12">
    <citation type="journal article" date="2009" name="Science">
        <title>Lysine acetylation targets protein complexes and co-regulates major cellular functions.</title>
        <authorList>
            <person name="Choudhary C."/>
            <person name="Kumar C."/>
            <person name="Gnad F."/>
            <person name="Nielsen M.L."/>
            <person name="Rehman M."/>
            <person name="Walther T.C."/>
            <person name="Olsen J.V."/>
            <person name="Mann M."/>
        </authorList>
    </citation>
    <scope>ACETYLATION [LARGE SCALE ANALYSIS] AT LYS-114</scope>
    <scope>IDENTIFICATION BY MASS SPECTROMETRY [LARGE SCALE ANALYSIS]</scope>
</reference>
<reference key="13">
    <citation type="journal article" date="2011" name="BMC Syst. Biol.">
        <title>Initial characterization of the human central proteome.</title>
        <authorList>
            <person name="Burkard T.R."/>
            <person name="Planyavsky M."/>
            <person name="Kaupe I."/>
            <person name="Breitwieser F.P."/>
            <person name="Buerckstuemmer T."/>
            <person name="Bennett K.L."/>
            <person name="Superti-Furga G."/>
            <person name="Colinge J."/>
        </authorList>
    </citation>
    <scope>IDENTIFICATION BY MASS SPECTROMETRY [LARGE SCALE ANALYSIS]</scope>
</reference>
<reference key="14">
    <citation type="journal article" date="2012" name="Mol. Cell. Proteomics">
        <title>Comparative large-scale characterisation of plant vs. mammal proteins reveals similar and idiosyncratic N-alpha acetylation features.</title>
        <authorList>
            <person name="Bienvenut W.V."/>
            <person name="Sumpton D."/>
            <person name="Martinez A."/>
            <person name="Lilla S."/>
            <person name="Espagne C."/>
            <person name="Meinnel T."/>
            <person name="Giglione C."/>
        </authorList>
    </citation>
    <scope>ACETYLATION [LARGE SCALE ANALYSIS] AT ALA-2</scope>
    <scope>CLEAVAGE OF INITIATOR METHIONINE [LARGE SCALE ANALYSIS]</scope>
    <scope>IDENTIFICATION BY MASS SPECTROMETRY [LARGE SCALE ANALYSIS]</scope>
</reference>
<reference key="15">
    <citation type="journal article" date="2012" name="Proc. Natl. Acad. Sci. U.S.A.">
        <title>N-terminal acetylome analyses and functional insights of the N-terminal acetyltransferase NatB.</title>
        <authorList>
            <person name="Van Damme P."/>
            <person name="Lasa M."/>
            <person name="Polevoda B."/>
            <person name="Gazquez C."/>
            <person name="Elosegui-Artola A."/>
            <person name="Kim D.S."/>
            <person name="De Juan-Pardo E."/>
            <person name="Demeyer K."/>
            <person name="Hole K."/>
            <person name="Larrea E."/>
            <person name="Timmerman E."/>
            <person name="Prieto J."/>
            <person name="Arnesen T."/>
            <person name="Sherman F."/>
            <person name="Gevaert K."/>
            <person name="Aldabe R."/>
        </authorList>
    </citation>
    <scope>ACETYLATION [LARGE SCALE ANALYSIS] AT ALA-2</scope>
    <scope>CLEAVAGE OF INITIATOR METHIONINE [LARGE SCALE ANALYSIS]</scope>
    <scope>IDENTIFICATION BY MASS SPECTROMETRY [LARGE SCALE ANALYSIS]</scope>
</reference>
<reference key="16">
    <citation type="journal article" date="2013" name="J. Proteome Res.">
        <title>Toward a comprehensive characterization of a human cancer cell phosphoproteome.</title>
        <authorList>
            <person name="Zhou H."/>
            <person name="Di Palma S."/>
            <person name="Preisinger C."/>
            <person name="Peng M."/>
            <person name="Polat A.N."/>
            <person name="Heck A.J."/>
            <person name="Mohammed S."/>
        </authorList>
    </citation>
    <scope>PHOSPHORYLATION [LARGE SCALE ANALYSIS] AT SER-15; SER-30 AND SER-66</scope>
    <scope>IDENTIFICATION BY MASS SPECTROMETRY [LARGE SCALE ANALYSIS]</scope>
    <source>
        <tissue>Cervix carcinoma</tissue>
        <tissue>Erythroleukemia</tissue>
    </source>
</reference>
<reference key="17">
    <citation type="journal article" date="2014" name="J. Proteomics">
        <title>An enzyme assisted RP-RPLC approach for in-depth analysis of human liver phosphoproteome.</title>
        <authorList>
            <person name="Bian Y."/>
            <person name="Song C."/>
            <person name="Cheng K."/>
            <person name="Dong M."/>
            <person name="Wang F."/>
            <person name="Huang J."/>
            <person name="Sun D."/>
            <person name="Wang L."/>
            <person name="Ye M."/>
            <person name="Zou H."/>
        </authorList>
    </citation>
    <scope>PHOSPHORYLATION [LARGE SCALE ANALYSIS] AT SER-66</scope>
    <scope>IDENTIFICATION BY MASS SPECTROMETRY [LARGE SCALE ANALYSIS]</scope>
    <source>
        <tissue>Liver</tissue>
    </source>
</reference>
<reference key="18">
    <citation type="journal article" date="2015" name="Proteomics">
        <title>N-terminome analysis of the human mitochondrial proteome.</title>
        <authorList>
            <person name="Vaca Jacome A.S."/>
            <person name="Rabilloud T."/>
            <person name="Schaeffer-Reiss C."/>
            <person name="Rompais M."/>
            <person name="Ayoub D."/>
            <person name="Lane L."/>
            <person name="Bairoch A."/>
            <person name="Van Dorsselaer A."/>
            <person name="Carapito C."/>
        </authorList>
    </citation>
    <scope>ACETYLATION [LARGE SCALE ANALYSIS] AT ALA-2</scope>
    <scope>CLEAVAGE OF INITIATOR METHIONINE [LARGE SCALE ANALYSIS]</scope>
    <scope>IDENTIFICATION BY MASS SPECTROMETRY [LARGE SCALE ANALYSIS]</scope>
</reference>
<reference key="19">
    <citation type="journal article" date="2004" name="Biochemistry">
        <title>Three-dimensional structure of human adenine phosphoribosyltransferase and its relation to DHA-urolithiasis.</title>
        <authorList>
            <person name="Silva M."/>
            <person name="Silva C.H."/>
            <person name="Iulek J."/>
            <person name="Thiemann O.H."/>
        </authorList>
    </citation>
    <scope>X-RAY CRYSTALLOGRAPHY (2.1 ANGSTROMS)</scope>
    <scope>FUNCTION</scope>
    <scope>CATALYTIC ACTIVITY</scope>
    <scope>BIOPHYSICOCHEMICAL PROPERTIES</scope>
    <scope>PATHWAY</scope>
</reference>
<reference key="20">
    <citation type="journal article" date="1991" name="Am. J. Hum. Genet.">
        <title>Identification of a single missense mutation in the adenine phosphoribosyltransferase (APRT) gene from five Icelandic patients and a British patient.</title>
        <authorList>
            <person name="Chen J."/>
            <person name="Sahota A."/>
            <person name="Laxdal T."/>
            <person name="Scrine M."/>
            <person name="Bowman S."/>
            <person name="Cui C."/>
            <person name="Stambrook P.J."/>
            <person name="Tischfield J.A."/>
        </authorList>
    </citation>
    <scope>VARIANT APRTD VAL-65</scope>
</reference>
<reference key="21">
    <citation type="journal article" date="1994" name="Hum. Mol. Genet.">
        <title>Missense mutation in the adenine phosphoribosyltransferase gene causing 2,8-dihydroxyadenine urolithiasis.</title>
        <authorList>
            <person name="Sahota A."/>
            <person name="Chen J."/>
            <person name="Boyadjiev S.A."/>
            <person name="Gault M.H."/>
            <person name="Tischfield J.A."/>
        </authorList>
    </citation>
    <scope>VARIANT APRTD PRO-110</scope>
</reference>
<reference key="22">
    <citation type="journal article" date="1987" name="J. Clin. Invest.">
        <title>Human adenine phosphoribosyltransferase. Identification of allelic mutations at the nucleotide level as a cause of complete deficiency of the enzyme.</title>
        <authorList>
            <person name="Hidaka Y."/>
            <person name="Palella T.D."/>
            <person name="O'Toole T.E."/>
            <person name="Tarle S.A."/>
            <person name="Kelley W.N."/>
        </authorList>
    </citation>
    <scope>VARIANT APRTD THR-136</scope>
</reference>
<reference key="23">
    <citation type="journal article" date="1988" name="J. Clin. Invest.">
        <title>Human adenine phosphoribosyltransferase deficiency. Demonstration of a single mutant allele common to the Japanese.</title>
        <authorList>
            <person name="Hidaka Y."/>
            <person name="Tarle S.A."/>
            <person name="Fujimori S."/>
            <person name="Kamatani N."/>
            <person name="Kelley W.N."/>
        </authorList>
    </citation>
    <scope>VARIANTS APRTD THR-136 AND PHE-173 DEL</scope>
</reference>
<reference key="24">
    <citation type="journal article" date="1992" name="J. Clin. Invest.">
        <title>Only three mutations account for almost all defective alleles causing adenine phosphoribosyltransferase deficiency in Japanese patients.</title>
        <authorList>
            <person name="Kamatani N."/>
            <person name="Hakoda M."/>
            <person name="Otsuka S."/>
            <person name="Yoshikawa H."/>
            <person name="Kashiwazaki S."/>
        </authorList>
    </citation>
    <scope>VARIANT APRTD THR-136</scope>
</reference>
<reference key="25">
    <citation type="journal article" date="2001" name="Mol. Genet. Metab.">
        <title>2,8-Dihydroxyadenine urolithiasis in a patient with considerable residual adenine phosphoribosyltransferase activity in cell extracts but with mutations in both copies of APRT.</title>
        <authorList>
            <person name="Deng L."/>
            <person name="Yang M."/>
            <person name="Fruend S."/>
            <person name="Wessel T."/>
            <person name="De Abreu R.A."/>
            <person name="Tischfield J.A."/>
            <person name="Sahota A."/>
        </authorList>
    </citation>
    <scope>VARIANTS APRTD PHE-150 AND ARG-153</scope>
</reference>
<reference key="26">
    <citation type="journal article" date="2004" name="Nucleosides Nucleotides Nucleic Acids">
        <title>Identification of two novel mutations in adenine phosphoribosyltransferase gene in patients with 2,8-dihydroxyadenine urolithiasis.</title>
        <authorList>
            <person name="Taniguchi A."/>
            <person name="Tsuchida S."/>
            <person name="Kuno S."/>
            <person name="Mita M."/>
            <person name="Machida T."/>
            <person name="Ioritani N."/>
            <person name="Terai C."/>
            <person name="Yamanaka H."/>
            <person name="Kamatani N."/>
        </authorList>
    </citation>
    <scope>VARIANTS APRTD MET-84 AND ASP-133</scope>
</reference>
<reference key="27">
    <citation type="journal article" date="2011" name="Acta Paediatr.">
        <title>A Japanese boy with adenine phosphoribosyltransferase (APRT) deficiency caused by compound heterozygosity including a novel missense mutation in APRT gene.</title>
        <authorList>
            <person name="Nozue H."/>
            <person name="Kamoda T."/>
            <person name="Saitoh H."/>
            <person name="Ichikawa K."/>
            <person name="Taniguchi A."/>
        </authorList>
    </citation>
    <scope>VARIANTS APRTD PRO-33 AND THR-136</scope>
</reference>
<evidence type="ECO:0000269" key="1">
    <source>
    </source>
</evidence>
<evidence type="ECO:0000269" key="2">
    <source>
    </source>
</evidence>
<evidence type="ECO:0000269" key="3">
    <source>
    </source>
</evidence>
<evidence type="ECO:0000269" key="4">
    <source>
    </source>
</evidence>
<evidence type="ECO:0000269" key="5">
    <source>
    </source>
</evidence>
<evidence type="ECO:0000269" key="6">
    <source>
    </source>
</evidence>
<evidence type="ECO:0000269" key="7">
    <source>
    </source>
</evidence>
<evidence type="ECO:0000269" key="8">
    <source>
    </source>
</evidence>
<evidence type="ECO:0000269" key="9">
    <source>
    </source>
</evidence>
<evidence type="ECO:0000269" key="10">
    <source>
    </source>
</evidence>
<evidence type="ECO:0000269" key="11">
    <source>
    </source>
</evidence>
<evidence type="ECO:0000269" key="12">
    <source ref="4"/>
</evidence>
<evidence type="ECO:0000303" key="13">
    <source>
    </source>
</evidence>
<evidence type="ECO:0000305" key="14"/>
<evidence type="ECO:0000312" key="15">
    <source>
        <dbReference type="HGNC" id="HGNC:626"/>
    </source>
</evidence>
<evidence type="ECO:0007744" key="16">
    <source>
    </source>
</evidence>
<evidence type="ECO:0007744" key="17">
    <source>
    </source>
</evidence>
<evidence type="ECO:0007744" key="18">
    <source>
    </source>
</evidence>
<evidence type="ECO:0007744" key="19">
    <source>
    </source>
</evidence>
<evidence type="ECO:0007744" key="20">
    <source>
    </source>
</evidence>
<evidence type="ECO:0007744" key="21">
    <source>
    </source>
</evidence>
<evidence type="ECO:0007744" key="22">
    <source>
    </source>
</evidence>
<evidence type="ECO:0007744" key="23">
    <source>
    </source>
</evidence>
<evidence type="ECO:0007829" key="24">
    <source>
        <dbReference type="PDB" id="6FCH"/>
    </source>
</evidence>
<evidence type="ECO:0007829" key="25">
    <source>
        <dbReference type="PDB" id="6FCL"/>
    </source>
</evidence>
<name>APT_HUMAN</name>
<sequence length="180" mass="19608">MADSELQLVEQRIRSFPDFPTPGVVFRDISPVLKDPASFRAAIGLLARHLKATHGGRIDYIAGLDSRGFLFGPSLAQELGLGCVLIRKRGKLPGPTLWASYSLEYGKAELEIQKDALEPGQRVVVVDDLLATGGTMNAACELLGRLQAEVLECVSLVELTSLKGREKLAPVPFFSLLQYE</sequence>